<sequence>MGARASVLSGGKLDAWEKIRLKPGGKKRYRLKHLVWASRELERFALNPSLLETTEGCKKIIGQLQSSLQTGSEELKSLYNAVVVLYYVHQRIDVRDTKEALDKLQEEQDKSQQKEQQKAADKEVSQNYPIVQNIQGQMVHQALSPRTLNAWVKVIEEKAFSPEVIPMFSALSEGATPQDLNTMLNTVGGHQAAMQMLKDTINEEAAEWDRLHPVHAGPIPPGQMREPRGSDIAGTTSTLQEQITWMTGNPPVPVGEIYKRWIILGLNKIVRMYSPVSILDIKQGPKEPFRDYVDRFFKTLRAEQATQEVKNWMTETLLVQNSNPDCKTILKALGPGATLEEMMTACQGVGGPGHKARILAEAMSKATSTAIMMQKSNFKGQKRIVKCFNCGKEGHIARNCRAPRKKGCWKCGKEGHQMKDCTERQANFFRENLAFQQGEARKFSSEQTRANSPASRELRVRRGDNPLPEAGAERRGTGSSLSFPQITLWQRPLVAIRVGGQLREALLDTGADDTVLEDINLPGKWKPKMIGGIGGFIKVRQYDQIPIEICGQKAIGTVLVGPTPVNIIGRNLLTQLGCTLNFPISPIETVPVKLKPGMDGPRVKQWPLTEEKIKALTEICTEMEKEGKISKIGPENPYNTPVFAIKKKDSTKWRKLVDFRELNKRTQDFWEVQLGIPHPAGLKKKKSVTVLDVGDAYFSVPLDKEFRKYTAFTIPSINNETPGIRYQYNVLPQGWKGSPAIFQCSMTKILEPFRAKNPEIVIYQYMDDLYVGSDLEIGQHRTKIEELREHLLKWGFTTPDKKHQKEPPFLWMGYELHPDKWTVQPIQLPEKSSWTVNDIQKLVGKLNWASQIYPGIRIKHLCRLLRGAKALTDVVPLTAEAELELAENREIIKEPVHGVYYDPSKDLIAEIQKQGHDQWTYQIYQEPYKNLKTGKYAKRKSAHTNDVKQLTEVVQKIATESIVIWGKIPKFRLPIQKETWEIWWTEYWQATWIPEWEFVNTPPLVKLWYQLETEPIAGAETFYVDGAANRETKLGKAGYVTDRGRQKVVPLTETTNQKTELQAIHLALQDSGSEVNIVTDSQYALGIIQAQPDKSESELVNQIIEQLIQKEKVYLSWVPAHKGIGGNEQVDKLVSSGIRKVLFLDGIDKAQEEHEKYHNNWRAMASDFNLPPVVAKEIVANCDKCQLKGEAMHGQVDCSPGIWQLDCTHLEGKIILVAVHVASGYIEAEVIPAETGQETAYFILKLAGRWPVKIIHTDNGSNFTSTVVKAACWWAGIQQEFGVPYNPQSQGVVESMNKELKKIIGQIRDQAEHLKTAVQMAVFIHNFKRKGGIGGYSAGERIIDIIATDIQTKELQKQITKIQNFRVYFRDSRDPVWKGPAKLLWKGEGAVVIQDNNEIKVVPRRKAKIIRDYGKQMAGDDCVAGRQDED</sequence>
<protein>
    <recommendedName>
        <fullName>Gag-Pol polyprotein</fullName>
    </recommendedName>
    <alternativeName>
        <fullName>Pr160Gag-Pol</fullName>
    </alternativeName>
    <component>
        <recommendedName>
            <fullName>Matrix protein p17</fullName>
            <shortName>MA</shortName>
        </recommendedName>
    </component>
    <component>
        <recommendedName>
            <fullName>Capsid protein p24</fullName>
            <shortName>CA</shortName>
        </recommendedName>
    </component>
    <component>
        <recommendedName>
            <fullName evidence="7">Spacer peptide 1</fullName>
            <shortName>SP1</shortName>
        </recommendedName>
        <alternativeName>
            <fullName>p2</fullName>
        </alternativeName>
    </component>
    <component>
        <recommendedName>
            <fullName>Nucleocapsid protein p7</fullName>
            <shortName>NC</shortName>
        </recommendedName>
    </component>
    <component>
        <recommendedName>
            <fullName>Transframe peptide</fullName>
            <shortName>TF</shortName>
        </recommendedName>
    </component>
    <component>
        <recommendedName>
            <fullName>p6-pol</fullName>
            <shortName>p6*</shortName>
        </recommendedName>
    </component>
    <component>
        <recommendedName>
            <fullName>Protease</fullName>
            <ecNumber>3.4.23.16</ecNumber>
        </recommendedName>
        <alternativeName>
            <fullName>PR</fullName>
        </alternativeName>
        <alternativeName>
            <fullName>Retropepsin</fullName>
        </alternativeName>
    </component>
    <component>
        <recommendedName>
            <fullName>Reverse transcriptase/ribonuclease H</fullName>
            <ecNumber>2.7.7.49</ecNumber>
            <ecNumber>2.7.7.7</ecNumber>
            <ecNumber>3.1.26.13</ecNumber>
        </recommendedName>
        <alternativeName>
            <fullName>Exoribonuclease H</fullName>
            <ecNumber>3.1.13.2</ecNumber>
        </alternativeName>
        <alternativeName>
            <fullName>p66 RT</fullName>
        </alternativeName>
    </component>
    <component>
        <recommendedName>
            <fullName>p51 RT</fullName>
        </recommendedName>
    </component>
    <component>
        <recommendedName>
            <fullName>p15</fullName>
        </recommendedName>
    </component>
    <component>
        <recommendedName>
            <fullName>Integrase</fullName>
            <shortName>IN</shortName>
            <ecNumber evidence="5">2.7.7.-</ecNumber>
            <ecNumber evidence="5">3.1.-.-</ecNumber>
        </recommendedName>
    </component>
</protein>
<keyword id="KW-1073">Activation of host caspases by virus</keyword>
<keyword id="KW-0014">AIDS</keyword>
<keyword id="KW-0064">Aspartyl protease</keyword>
<keyword id="KW-0167">Capsid protein</keyword>
<keyword id="KW-0229">DNA integration</keyword>
<keyword id="KW-0233">DNA recombination</keyword>
<keyword id="KW-0238">DNA-binding</keyword>
<keyword id="KW-0239">DNA-directed DNA polymerase</keyword>
<keyword id="KW-0255">Endonuclease</keyword>
<keyword id="KW-1262">Eukaryotic host gene expression shutoff by virus</keyword>
<keyword id="KW-1193">Eukaryotic host translation shutoff by virus</keyword>
<keyword id="KW-1032">Host cell membrane</keyword>
<keyword id="KW-1035">Host cytoplasm</keyword>
<keyword id="KW-1039">Host endosome</keyword>
<keyword id="KW-1190">Host gene expression shutoff by virus</keyword>
<keyword id="KW-1043">Host membrane</keyword>
<keyword id="KW-1048">Host nucleus</keyword>
<keyword id="KW-0945">Host-virus interaction</keyword>
<keyword id="KW-0378">Hydrolase</keyword>
<keyword id="KW-0446">Lipid-binding</keyword>
<keyword id="KW-0449">Lipoprotein</keyword>
<keyword id="KW-0460">Magnesium</keyword>
<keyword id="KW-0472">Membrane</keyword>
<keyword id="KW-0479">Metal-binding</keyword>
<keyword id="KW-1119">Modulation of host cell apoptosis by virus</keyword>
<keyword id="KW-0511">Multifunctional enzyme</keyword>
<keyword id="KW-0519">Myristate</keyword>
<keyword id="KW-0540">Nuclease</keyword>
<keyword id="KW-0548">Nucleotidyltransferase</keyword>
<keyword id="KW-0597">Phosphoprotein</keyword>
<keyword id="KW-0645">Protease</keyword>
<keyword id="KW-0677">Repeat</keyword>
<keyword id="KW-0688">Ribosomal frameshifting</keyword>
<keyword id="KW-0694">RNA-binding</keyword>
<keyword id="KW-0695">RNA-directed DNA polymerase</keyword>
<keyword id="KW-0808">Transferase</keyword>
<keyword id="KW-1179">Viral genome integration</keyword>
<keyword id="KW-0543">Viral nucleoprotein</keyword>
<keyword id="KW-1163">Viral penetration into host nucleus</keyword>
<keyword id="KW-1188">Viral release from host cell</keyword>
<keyword id="KW-0946">Virion</keyword>
<keyword id="KW-0917">Virion maturation</keyword>
<keyword id="KW-1160">Virus entry into host cell</keyword>
<keyword id="KW-0862">Zinc</keyword>
<keyword id="KW-0863">Zinc-finger</keyword>
<name>POL_HV1MP</name>
<dbReference type="EC" id="3.4.23.16"/>
<dbReference type="EC" id="2.7.7.49"/>
<dbReference type="EC" id="2.7.7.7"/>
<dbReference type="EC" id="3.1.26.13"/>
<dbReference type="EC" id="3.1.13.2"/>
<dbReference type="EC" id="2.7.7.-" evidence="5"/>
<dbReference type="EC" id="3.1.-.-" evidence="5"/>
<dbReference type="EMBL" id="AJ249236">
    <property type="protein sequence ID" value="CAB58977.1"/>
    <property type="status" value="ALT_SEQ"/>
    <property type="molecule type" value="Genomic_RNA"/>
</dbReference>
<dbReference type="PIR" id="C47330">
    <property type="entry name" value="C47330"/>
</dbReference>
<dbReference type="PIR" id="F47330">
    <property type="entry name" value="F47330"/>
</dbReference>
<dbReference type="SMR" id="Q9QBZ5"/>
<dbReference type="MEROPS" id="A02.001"/>
<dbReference type="PRO" id="PR:Q9QBZ5"/>
<dbReference type="Proteomes" id="UP000120463">
    <property type="component" value="Segment"/>
</dbReference>
<dbReference type="GO" id="GO:0043657">
    <property type="term" value="C:host cell"/>
    <property type="evidence" value="ECO:0007669"/>
    <property type="project" value="GOC"/>
</dbReference>
<dbReference type="GO" id="GO:0042025">
    <property type="term" value="C:host cell nucleus"/>
    <property type="evidence" value="ECO:0007669"/>
    <property type="project" value="UniProtKB-SubCell"/>
</dbReference>
<dbReference type="GO" id="GO:0020002">
    <property type="term" value="C:host cell plasma membrane"/>
    <property type="evidence" value="ECO:0007669"/>
    <property type="project" value="UniProtKB-SubCell"/>
</dbReference>
<dbReference type="GO" id="GO:0072494">
    <property type="term" value="C:host multivesicular body"/>
    <property type="evidence" value="ECO:0007669"/>
    <property type="project" value="UniProtKB-SubCell"/>
</dbReference>
<dbReference type="GO" id="GO:0016020">
    <property type="term" value="C:membrane"/>
    <property type="evidence" value="ECO:0007669"/>
    <property type="project" value="UniProtKB-KW"/>
</dbReference>
<dbReference type="GO" id="GO:0019013">
    <property type="term" value="C:viral nucleocapsid"/>
    <property type="evidence" value="ECO:0007669"/>
    <property type="project" value="UniProtKB-KW"/>
</dbReference>
<dbReference type="GO" id="GO:0055036">
    <property type="term" value="C:virion membrane"/>
    <property type="evidence" value="ECO:0007669"/>
    <property type="project" value="UniProtKB-SubCell"/>
</dbReference>
<dbReference type="GO" id="GO:0004190">
    <property type="term" value="F:aspartic-type endopeptidase activity"/>
    <property type="evidence" value="ECO:0007669"/>
    <property type="project" value="UniProtKB-KW"/>
</dbReference>
<dbReference type="GO" id="GO:0003677">
    <property type="term" value="F:DNA binding"/>
    <property type="evidence" value="ECO:0007669"/>
    <property type="project" value="UniProtKB-KW"/>
</dbReference>
<dbReference type="GO" id="GO:0003887">
    <property type="term" value="F:DNA-directed DNA polymerase activity"/>
    <property type="evidence" value="ECO:0007669"/>
    <property type="project" value="UniProtKB-KW"/>
</dbReference>
<dbReference type="GO" id="GO:0004533">
    <property type="term" value="F:exoribonuclease H activity"/>
    <property type="evidence" value="ECO:0007669"/>
    <property type="project" value="UniProtKB-EC"/>
</dbReference>
<dbReference type="GO" id="GO:0008289">
    <property type="term" value="F:lipid binding"/>
    <property type="evidence" value="ECO:0007669"/>
    <property type="project" value="UniProtKB-KW"/>
</dbReference>
<dbReference type="GO" id="GO:0035613">
    <property type="term" value="F:RNA stem-loop binding"/>
    <property type="evidence" value="ECO:0007669"/>
    <property type="project" value="TreeGrafter"/>
</dbReference>
<dbReference type="GO" id="GO:0003964">
    <property type="term" value="F:RNA-directed DNA polymerase activity"/>
    <property type="evidence" value="ECO:0007669"/>
    <property type="project" value="UniProtKB-KW"/>
</dbReference>
<dbReference type="GO" id="GO:0004523">
    <property type="term" value="F:RNA-DNA hybrid ribonuclease activity"/>
    <property type="evidence" value="ECO:0007669"/>
    <property type="project" value="InterPro"/>
</dbReference>
<dbReference type="GO" id="GO:0005198">
    <property type="term" value="F:structural molecule activity"/>
    <property type="evidence" value="ECO:0007669"/>
    <property type="project" value="InterPro"/>
</dbReference>
<dbReference type="GO" id="GO:0008270">
    <property type="term" value="F:zinc ion binding"/>
    <property type="evidence" value="ECO:0007669"/>
    <property type="project" value="UniProtKB-KW"/>
</dbReference>
<dbReference type="GO" id="GO:0015074">
    <property type="term" value="P:DNA integration"/>
    <property type="evidence" value="ECO:0007669"/>
    <property type="project" value="UniProtKB-KW"/>
</dbReference>
<dbReference type="GO" id="GO:0006310">
    <property type="term" value="P:DNA recombination"/>
    <property type="evidence" value="ECO:0007669"/>
    <property type="project" value="UniProtKB-KW"/>
</dbReference>
<dbReference type="GO" id="GO:0075713">
    <property type="term" value="P:establishment of integrated proviral latency"/>
    <property type="evidence" value="ECO:0007669"/>
    <property type="project" value="UniProtKB-KW"/>
</dbReference>
<dbReference type="GO" id="GO:0006508">
    <property type="term" value="P:proteolysis"/>
    <property type="evidence" value="ECO:0007669"/>
    <property type="project" value="UniProtKB-KW"/>
</dbReference>
<dbReference type="GO" id="GO:0046718">
    <property type="term" value="P:symbiont entry into host cell"/>
    <property type="evidence" value="ECO:0007669"/>
    <property type="project" value="UniProtKB-KW"/>
</dbReference>
<dbReference type="GO" id="GO:0052151">
    <property type="term" value="P:symbiont-mediated activation of host apoptosis"/>
    <property type="evidence" value="ECO:0007669"/>
    <property type="project" value="UniProtKB-KW"/>
</dbReference>
<dbReference type="GO" id="GO:0039657">
    <property type="term" value="P:symbiont-mediated suppression of host gene expression"/>
    <property type="evidence" value="ECO:0007669"/>
    <property type="project" value="UniProtKB-KW"/>
</dbReference>
<dbReference type="GO" id="GO:0044826">
    <property type="term" value="P:viral genome integration into host DNA"/>
    <property type="evidence" value="ECO:0007669"/>
    <property type="project" value="UniProtKB-KW"/>
</dbReference>
<dbReference type="GO" id="GO:0075732">
    <property type="term" value="P:viral penetration into host nucleus"/>
    <property type="evidence" value="ECO:0007669"/>
    <property type="project" value="UniProtKB-KW"/>
</dbReference>
<dbReference type="GO" id="GO:0075523">
    <property type="term" value="P:viral translational frameshifting"/>
    <property type="evidence" value="ECO:0007669"/>
    <property type="project" value="UniProtKB-KW"/>
</dbReference>
<dbReference type="CDD" id="cd05482">
    <property type="entry name" value="HIV_retropepsin_like"/>
    <property type="match status" value="1"/>
</dbReference>
<dbReference type="CDD" id="cd01645">
    <property type="entry name" value="RT_Rtv"/>
    <property type="match status" value="1"/>
</dbReference>
<dbReference type="FunFam" id="1.10.1200.30:FF:000001">
    <property type="entry name" value="Gag polyprotein"/>
    <property type="match status" value="1"/>
</dbReference>
<dbReference type="FunFam" id="1.10.375.10:FF:000001">
    <property type="entry name" value="Gag polyprotein"/>
    <property type="match status" value="1"/>
</dbReference>
<dbReference type="FunFam" id="4.10.60.10:FF:000001">
    <property type="entry name" value="Gag polyprotein"/>
    <property type="match status" value="1"/>
</dbReference>
<dbReference type="FunFam" id="2.40.70.10:FF:000001">
    <property type="entry name" value="Gag-Pol polyprotein"/>
    <property type="match status" value="1"/>
</dbReference>
<dbReference type="FunFam" id="3.30.420.10:FF:000025">
    <property type="entry name" value="Gag-Pol polyprotein"/>
    <property type="match status" value="1"/>
</dbReference>
<dbReference type="FunFam" id="3.30.70.270:FF:000006">
    <property type="entry name" value="Gag-Pol polyprotein"/>
    <property type="match status" value="1"/>
</dbReference>
<dbReference type="FunFam" id="3.30.420.10:FF:000017">
    <property type="entry name" value="POL polyprotein"/>
    <property type="match status" value="1"/>
</dbReference>
<dbReference type="Gene3D" id="1.10.10.200">
    <property type="match status" value="1"/>
</dbReference>
<dbReference type="Gene3D" id="1.10.1200.30">
    <property type="match status" value="1"/>
</dbReference>
<dbReference type="Gene3D" id="3.30.70.270">
    <property type="match status" value="3"/>
</dbReference>
<dbReference type="Gene3D" id="2.40.70.10">
    <property type="entry name" value="Acid Proteases"/>
    <property type="match status" value="1"/>
</dbReference>
<dbReference type="Gene3D" id="3.10.10.10">
    <property type="entry name" value="HIV Type 1 Reverse Transcriptase, subunit A, domain 1"/>
    <property type="match status" value="1"/>
</dbReference>
<dbReference type="Gene3D" id="1.10.375.10">
    <property type="entry name" value="Human Immunodeficiency Virus Type 1 Capsid Protein"/>
    <property type="match status" value="1"/>
</dbReference>
<dbReference type="Gene3D" id="1.10.150.90">
    <property type="entry name" value="Immunodeficiency lentiviruses, gag gene matrix protein p17"/>
    <property type="match status" value="1"/>
</dbReference>
<dbReference type="Gene3D" id="2.30.30.10">
    <property type="entry name" value="Integrase, C-terminal domain superfamily, retroviral"/>
    <property type="match status" value="1"/>
</dbReference>
<dbReference type="Gene3D" id="3.30.420.10">
    <property type="entry name" value="Ribonuclease H-like superfamily/Ribonuclease H"/>
    <property type="match status" value="2"/>
</dbReference>
<dbReference type="Gene3D" id="1.20.5.760">
    <property type="entry name" value="Single helix bin"/>
    <property type="match status" value="1"/>
</dbReference>
<dbReference type="Gene3D" id="4.10.60.10">
    <property type="entry name" value="Zinc finger, CCHC-type"/>
    <property type="match status" value="1"/>
</dbReference>
<dbReference type="InterPro" id="IPR001969">
    <property type="entry name" value="Aspartic_peptidase_AS"/>
</dbReference>
<dbReference type="InterPro" id="IPR043502">
    <property type="entry name" value="DNA/RNA_pol_sf"/>
</dbReference>
<dbReference type="InterPro" id="IPR045345">
    <property type="entry name" value="Gag_p24_C"/>
</dbReference>
<dbReference type="InterPro" id="IPR017856">
    <property type="entry name" value="Integrase-like_N"/>
</dbReference>
<dbReference type="InterPro" id="IPR036862">
    <property type="entry name" value="Integrase_C_dom_sf_retrovir"/>
</dbReference>
<dbReference type="InterPro" id="IPR001037">
    <property type="entry name" value="Integrase_C_retrovir"/>
</dbReference>
<dbReference type="InterPro" id="IPR001584">
    <property type="entry name" value="Integrase_cat-core"/>
</dbReference>
<dbReference type="InterPro" id="IPR003308">
    <property type="entry name" value="Integrase_Zn-bd_dom_N"/>
</dbReference>
<dbReference type="InterPro" id="IPR000071">
    <property type="entry name" value="Lentvrl_matrix_N"/>
</dbReference>
<dbReference type="InterPro" id="IPR012344">
    <property type="entry name" value="Matrix_HIV/RSV_N"/>
</dbReference>
<dbReference type="InterPro" id="IPR001995">
    <property type="entry name" value="Peptidase_A2_cat"/>
</dbReference>
<dbReference type="InterPro" id="IPR021109">
    <property type="entry name" value="Peptidase_aspartic_dom_sf"/>
</dbReference>
<dbReference type="InterPro" id="IPR034170">
    <property type="entry name" value="Retropepsin-like_cat_dom"/>
</dbReference>
<dbReference type="InterPro" id="IPR018061">
    <property type="entry name" value="Retropepsins"/>
</dbReference>
<dbReference type="InterPro" id="IPR008916">
    <property type="entry name" value="Retrov_capsid_C"/>
</dbReference>
<dbReference type="InterPro" id="IPR008919">
    <property type="entry name" value="Retrov_capsid_N"/>
</dbReference>
<dbReference type="InterPro" id="IPR010999">
    <property type="entry name" value="Retrovr_matrix"/>
</dbReference>
<dbReference type="InterPro" id="IPR043128">
    <property type="entry name" value="Rev_trsase/Diguanyl_cyclase"/>
</dbReference>
<dbReference type="InterPro" id="IPR012337">
    <property type="entry name" value="RNaseH-like_sf"/>
</dbReference>
<dbReference type="InterPro" id="IPR002156">
    <property type="entry name" value="RNaseH_domain"/>
</dbReference>
<dbReference type="InterPro" id="IPR036397">
    <property type="entry name" value="RNaseH_sf"/>
</dbReference>
<dbReference type="InterPro" id="IPR000477">
    <property type="entry name" value="RT_dom"/>
</dbReference>
<dbReference type="InterPro" id="IPR010659">
    <property type="entry name" value="RVT_connect"/>
</dbReference>
<dbReference type="InterPro" id="IPR010661">
    <property type="entry name" value="RVT_thumb"/>
</dbReference>
<dbReference type="InterPro" id="IPR001878">
    <property type="entry name" value="Znf_CCHC"/>
</dbReference>
<dbReference type="InterPro" id="IPR036875">
    <property type="entry name" value="Znf_CCHC_sf"/>
</dbReference>
<dbReference type="PANTHER" id="PTHR41694">
    <property type="entry name" value="ENDOGENOUS RETROVIRUS GROUP K MEMBER POL PROTEIN"/>
    <property type="match status" value="1"/>
</dbReference>
<dbReference type="PANTHER" id="PTHR41694:SF3">
    <property type="entry name" value="RNA-DIRECTED DNA POLYMERASE-RELATED"/>
    <property type="match status" value="1"/>
</dbReference>
<dbReference type="Pfam" id="PF00540">
    <property type="entry name" value="Gag_p17"/>
    <property type="match status" value="1"/>
</dbReference>
<dbReference type="Pfam" id="PF19317">
    <property type="entry name" value="Gag_p24_C"/>
    <property type="match status" value="1"/>
</dbReference>
<dbReference type="Pfam" id="PF00552">
    <property type="entry name" value="IN_DBD_C"/>
    <property type="match status" value="1"/>
</dbReference>
<dbReference type="Pfam" id="PF02022">
    <property type="entry name" value="Integrase_Zn"/>
    <property type="match status" value="1"/>
</dbReference>
<dbReference type="Pfam" id="PF00075">
    <property type="entry name" value="RNase_H"/>
    <property type="match status" value="1"/>
</dbReference>
<dbReference type="Pfam" id="PF00665">
    <property type="entry name" value="rve"/>
    <property type="match status" value="1"/>
</dbReference>
<dbReference type="Pfam" id="PF00077">
    <property type="entry name" value="RVP"/>
    <property type="match status" value="1"/>
</dbReference>
<dbReference type="Pfam" id="PF00078">
    <property type="entry name" value="RVT_1"/>
    <property type="match status" value="1"/>
</dbReference>
<dbReference type="Pfam" id="PF06815">
    <property type="entry name" value="RVT_connect"/>
    <property type="match status" value="1"/>
</dbReference>
<dbReference type="Pfam" id="PF06817">
    <property type="entry name" value="RVT_thumb"/>
    <property type="match status" value="1"/>
</dbReference>
<dbReference type="Pfam" id="PF00098">
    <property type="entry name" value="zf-CCHC"/>
    <property type="match status" value="2"/>
</dbReference>
<dbReference type="PRINTS" id="PR00234">
    <property type="entry name" value="HIV1MATRIX"/>
</dbReference>
<dbReference type="SMART" id="SM00343">
    <property type="entry name" value="ZnF_C2HC"/>
    <property type="match status" value="2"/>
</dbReference>
<dbReference type="SUPFAM" id="SSF50630">
    <property type="entry name" value="Acid proteases"/>
    <property type="match status" value="1"/>
</dbReference>
<dbReference type="SUPFAM" id="SSF50122">
    <property type="entry name" value="DNA-binding domain of retroviral integrase"/>
    <property type="match status" value="1"/>
</dbReference>
<dbReference type="SUPFAM" id="SSF56672">
    <property type="entry name" value="DNA/RNA polymerases"/>
    <property type="match status" value="1"/>
</dbReference>
<dbReference type="SUPFAM" id="SSF46919">
    <property type="entry name" value="N-terminal Zn binding domain of HIV integrase"/>
    <property type="match status" value="1"/>
</dbReference>
<dbReference type="SUPFAM" id="SSF47836">
    <property type="entry name" value="Retroviral matrix proteins"/>
    <property type="match status" value="1"/>
</dbReference>
<dbReference type="SUPFAM" id="SSF47353">
    <property type="entry name" value="Retrovirus capsid dimerization domain-like"/>
    <property type="match status" value="1"/>
</dbReference>
<dbReference type="SUPFAM" id="SSF47943">
    <property type="entry name" value="Retrovirus capsid protein, N-terminal core domain"/>
    <property type="match status" value="1"/>
</dbReference>
<dbReference type="SUPFAM" id="SSF57756">
    <property type="entry name" value="Retrovirus zinc finger-like domains"/>
    <property type="match status" value="1"/>
</dbReference>
<dbReference type="SUPFAM" id="SSF53098">
    <property type="entry name" value="Ribonuclease H-like"/>
    <property type="match status" value="2"/>
</dbReference>
<dbReference type="PROSITE" id="PS50175">
    <property type="entry name" value="ASP_PROT_RETROV"/>
    <property type="match status" value="1"/>
</dbReference>
<dbReference type="PROSITE" id="PS00141">
    <property type="entry name" value="ASP_PROTEASE"/>
    <property type="match status" value="1"/>
</dbReference>
<dbReference type="PROSITE" id="PS50994">
    <property type="entry name" value="INTEGRASE"/>
    <property type="match status" value="1"/>
</dbReference>
<dbReference type="PROSITE" id="PS51027">
    <property type="entry name" value="INTEGRASE_DBD"/>
    <property type="match status" value="1"/>
</dbReference>
<dbReference type="PROSITE" id="PS50879">
    <property type="entry name" value="RNASE_H_1"/>
    <property type="match status" value="1"/>
</dbReference>
<dbReference type="PROSITE" id="PS50878">
    <property type="entry name" value="RT_POL"/>
    <property type="match status" value="1"/>
</dbReference>
<dbReference type="PROSITE" id="PS50158">
    <property type="entry name" value="ZF_CCHC"/>
    <property type="match status" value="2"/>
</dbReference>
<dbReference type="PROSITE" id="PS50876">
    <property type="entry name" value="ZF_INTEGRASE"/>
    <property type="match status" value="1"/>
</dbReference>
<comment type="function">
    <molecule>Gag-Pol polyprotein</molecule>
    <text evidence="1">Mediates, with Gag polyprotein, the essential events in virion assembly, including binding the plasma membrane, making the protein-protein interactions necessary to create spherical particles, recruiting the viral Env proteins, and packaging the genomic RNA via direct interactions with the RNA packaging sequence (Psi). Gag-Pol polyprotein may regulate its own translation, by the binding genomic RNA in the 5'-UTR. At low concentration, the polyprotein would promote translation, whereas at high concentration, the polyprotein would encapsidate genomic RNA and then shut off translation.</text>
</comment>
<comment type="function">
    <molecule>Matrix protein p17</molecule>
    <text evidence="7">Targets the polyprotein to the plasma membrane via a multipartite membrane-binding signal, that includes its myristoylated N-terminus. Matrix protein is part of the pre-integration complex. Implicated in the release from host cell mediated by Vpu. Binds to RNA.</text>
</comment>
<comment type="function">
    <molecule>Capsid protein p24</molecule>
    <text evidence="5 7">Forms the conical core that encapsulates the genomic RNA-nucleocapsid complex in the virion. Most core are conical, with only 7% tubular. The core is constituted by capsid protein hexamer subunits. The core is disassembled soon after virion entry (By similarity). Host restriction factors such as TRIM5-alpha or TRIMCyp bind retroviral capsids and cause premature capsid disassembly, leading to blocks in reverse transcription. Capsid restriction by TRIM5 is one of the factors which restricts HIV-1 to the human species. Host PIN1 apparently facilitates the virion uncoating. On the other hand, interactions with PDZD8 or CYPA stabilize the capsid.</text>
</comment>
<comment type="function">
    <molecule>Nucleocapsid protein p7</molecule>
    <text evidence="5">Encapsulates and protects viral dimeric unspliced genomic RNA (gRNA). Binds these RNAs through its zinc fingers. Acts as a nucleic acid chaperone which is involved in rearangement of nucleic acid secondary structure during gRNA retrotranscription. Also facilitates template switch leading to recombination. As part of the polyprotein, participates in gRNA dimerization, packaging, tRNA incorporation and virion assembly.</text>
</comment>
<comment type="function">
    <molecule>Protease</molecule>
    <text evidence="5 10">Aspartyl protease that mediates proteolytic cleavages of Gag and Gag-Pol polyproteins during or shortly after the release of the virion from the plasma membrane. Cleavages take place as an ordered, step-wise cascade to yield mature proteins. This process is called maturation. Displays maximal activity during the budding process just prior to particle release from the cell. Also cleaves Nef and Vif, probably concomitantly with viral structural proteins on maturation of virus particles. Hydrolyzes host EIF4GI and PABP1 in order to shut off the capped cellular mRNA translation. The resulting inhibition of cellular protein synthesis serves to ensure maximal viral gene expression and to evade host immune response. Also mediates cleavage of host YTHDF3. Mediates cleavage of host CARD8, thereby activating the CARD8 inflammasome, leading to the clearance of latent HIV-1 in patient CD4(+) T-cells after viral reactivation; in contrast, HIV-1 can evade CARD8-sensing when its protease remains inactive in infected cells prior to viral budding (By similarity).</text>
</comment>
<comment type="function">
    <molecule>Reverse transcriptase/ribonuclease H</molecule>
    <text evidence="5">Multifunctional enzyme that converts the viral RNA genome into dsDNA in the cytoplasm, shortly after virus entry into the cell. This enzyme displays a DNA polymerase activity that can copy either DNA or RNA templates, and a ribonuclease H (RNase H) activity that cleaves the RNA strand of RNA-DNA heteroduplexes in a partially processive 3' to 5' endonucleasic mode. Conversion of viral genomic RNA into dsDNA requires many steps. A tRNA(3)-Lys binds to the primer-binding site (PBS) situated at the 5'-end of the viral RNA. RT uses the 3' end of the tRNA primer to perform a short round of RNA-dependent minus-strand DNA synthesis. The reading proceeds through the U5 region and ends after the repeated (R) region which is present at both ends of viral RNA. The portion of the RNA-DNA heteroduplex is digested by the RNase H, resulting in a ssDNA product attached to the tRNA primer. This ssDNA/tRNA hybridizes with the identical R region situated at the 3' end of viral RNA. This template exchange, known as minus-strand DNA strong stop transfer, can be either intra- or intermolecular. RT uses the 3' end of this newly synthesized short ssDNA to perform the RNA-dependent minus-strand DNA synthesis of the whole template. RNase H digests the RNA template except for two polypurine tracts (PPTs) situated at the 5'-end and near the center of the genome. It is not clear if both polymerase and RNase H activities are simultaneous. RNase H probably can proceed both in a polymerase-dependent (RNA cut into small fragments by the same RT performing DNA synthesis) and a polymerase-independent mode (cleavage of remaining RNA fragments by free RTs). Secondly, RT performs DNA-directed plus-strand DNA synthesis using the PPTs that have not been removed by RNase H as primers. PPTs and tRNA primers are then removed by RNase H. The 3' and 5' ssDNA PBS regions hybridize to form a circular dsDNA intermediate. Strand displacement synthesis by RT to the PBS and PPT ends produces a blunt ended, linear dsDNA copy of the viral genome that includes long terminal repeats (LTRs) at both ends.</text>
</comment>
<comment type="function">
    <molecule>Integrase</molecule>
    <text evidence="5">Catalyzes viral DNA integration into the host chromosome, by performing a series of DNA cutting and joining reactions. This enzyme activity takes place after virion entry into a cell and reverse transcription of the RNA genome in dsDNA. The first step in the integration process is 3' processing. This step requires a complex comprising the viral genome, matrix protein, Vpr and integrase. This complex is called the pre-integration complex (PIC). The integrase protein removes 2 nucleotides from each 3' end of the viral DNA, leaving recessed CA OH's at the 3' ends. In the second step, the PIC enters cell nucleus. This process is mediated through integrase and Vpr proteins, and allows the virus to infect a non dividing cell. This ability to enter the nucleus is specific of lentiviruses, other retroviruses cannot and rely on cell division to access cell chromosomes. In the third step, termed strand transfer, the integrase protein joins the previously processed 3' ends to the 5' ends of strands of target cellular DNA at the site of integration. The 5'-ends are produced by integrase-catalyzed staggered cuts, 5 bp apart. A Y-shaped, gapped, recombination intermediate results, with the 5'-ends of the viral DNA strands and the 3' ends of target DNA strands remaining unjoined, flanking a gap of 5 bp. The last step is viral DNA integration into host chromosome. This involves host DNA repair synthesis in which the 5 bp gaps between the unjoined strands are filled in and then ligated. Since this process occurs at both cuts flanking the HIV genome, a 5 bp duplication of host DNA is produced at the ends of HIV-1 integration. Alternatively, Integrase may catalyze the excision of viral DNA just after strand transfer, this is termed disintegration.</text>
</comment>
<comment type="catalytic activity">
    <reaction evidence="10">
        <text>Specific for a P1 residue that is hydrophobic, and P1' variable, but often Pro.</text>
        <dbReference type="EC" id="3.4.23.16"/>
    </reaction>
</comment>
<comment type="catalytic activity">
    <reaction evidence="1">
        <text>Endohydrolysis of RNA in RNA/DNA hybrids. Three different cleavage modes: 1. sequence-specific internal cleavage of RNA. Human immunodeficiency virus type 1 and Moloney murine leukemia virus enzymes prefer to cleave the RNA strand one nucleotide away from the RNA-DNA junction. 2. RNA 5'-end directed cleavage 13-19 nucleotides from the RNA end. 3. DNA 3'-end directed cleavage 15-20 nucleotides away from the primer terminus.</text>
        <dbReference type="EC" id="3.1.26.13"/>
    </reaction>
</comment>
<comment type="catalytic activity">
    <reaction evidence="1">
        <text>3'-end directed exonucleolytic cleavage of viral RNA-DNA hybrid.</text>
        <dbReference type="EC" id="3.1.13.2"/>
    </reaction>
</comment>
<comment type="catalytic activity">
    <reaction evidence="11">
        <text>DNA(n) + a 2'-deoxyribonucleoside 5'-triphosphate = DNA(n+1) + diphosphate</text>
        <dbReference type="Rhea" id="RHEA:22508"/>
        <dbReference type="Rhea" id="RHEA-COMP:17339"/>
        <dbReference type="Rhea" id="RHEA-COMP:17340"/>
        <dbReference type="ChEBI" id="CHEBI:33019"/>
        <dbReference type="ChEBI" id="CHEBI:61560"/>
        <dbReference type="ChEBI" id="CHEBI:173112"/>
        <dbReference type="EC" id="2.7.7.49"/>
    </reaction>
</comment>
<comment type="catalytic activity">
    <reaction evidence="11">
        <text>DNA(n) + a 2'-deoxyribonucleoside 5'-triphosphate = DNA(n+1) + diphosphate</text>
        <dbReference type="Rhea" id="RHEA:22508"/>
        <dbReference type="Rhea" id="RHEA-COMP:17339"/>
        <dbReference type="Rhea" id="RHEA-COMP:17340"/>
        <dbReference type="ChEBI" id="CHEBI:33019"/>
        <dbReference type="ChEBI" id="CHEBI:61560"/>
        <dbReference type="ChEBI" id="CHEBI:173112"/>
        <dbReference type="EC" id="2.7.7.7"/>
    </reaction>
</comment>
<comment type="cofactor">
    <cofactor evidence="1">
        <name>Mg(2+)</name>
        <dbReference type="ChEBI" id="CHEBI:18420"/>
    </cofactor>
    <text evidence="1">Binds 2 magnesium ions for reverse transcriptase polymerase activity.</text>
</comment>
<comment type="cofactor">
    <cofactor evidence="1">
        <name>Mg(2+)</name>
        <dbReference type="ChEBI" id="CHEBI:18420"/>
    </cofactor>
    <text evidence="1">Binds 2 magnesium ions for ribonuclease H (RNase H) activity. Substrate-binding is a precondition for magnesium binding.</text>
</comment>
<comment type="cofactor">
    <cofactor evidence="1">
        <name>Mg(2+)</name>
        <dbReference type="ChEBI" id="CHEBI:18420"/>
    </cofactor>
    <text evidence="1">Magnesium ions are required for integrase activity. Binds at least 1, maybe 2 magnesium ions.</text>
</comment>
<comment type="activity regulation">
    <text evidence="1">Protease: The viral protease is inhibited by many synthetic protease inhibitors (PIs), such as amprenavir, atazanavir, indinavir, loprinavir, nelfinavir, ritonavir and saquinavir. Use of protease inhibitors in tritherapy regimens permit more ambitious therapeutic strategies. Reverse transcriptase/ribonuclease H: RT can be inhibited either by nucleoside RT inhibitors (NRTIs) or by non nucleoside RT inhibitors (NNRTIs). NRTIs act as chain terminators, whereas NNRTIs inhibit DNA polymerization by binding a small hydrophobic pocket near the RT active site and inducing an allosteric change in this region. Classical NRTIs are abacavir, adefovir (PMEA), didanosine (ddI), lamivudine (3TC), stavudine (d4T), tenofovir (PMPA), zalcitabine (ddC), and zidovudine (AZT). Classical NNRTIs are atevirdine (BHAP U-87201E), delavirdine, efavirenz (DMP-266), emivirine (I-EBU), and nevirapine (BI-RG-587). The tritherapies used as a basic effective treatment of AIDS associate two NRTIs and one NNRTI.</text>
</comment>
<comment type="subunit">
    <molecule>Matrix protein p17</molecule>
    <text evidence="5 7">Homotrimer; further assembles as hexamers of trimers (By similarity). Interacts with gp41 (via C-terminus) (By similarity). Interacts with host CALM1; this interaction induces a conformational change in the Matrix protein, triggering exposure of the myristate group (By similarity). Interacts with host AP3D1; this interaction allows the polyprotein trafficking to multivesicular bodies during virus assembly (By similarity). Part of the pre-integration complex (PIC) which is composed of viral genome, matrix protein, Vpr and integrase (By similarity).</text>
</comment>
<comment type="subunit">
    <molecule>Capsid protein p24</molecule>
    <text evidence="5 7">Homodimer; the homodimer further multimerizes as homohexamers or homopentamers. Interacts with human PPIA/CYPA (By similarity); This interaction stabilizes the capsid. Interacts with human NUP153 (By similarity). Interacts with host PDZD8; this interaction stabilizes the capsid (By similarity). Interacts with monkey TRIM5; this interaction destabilizes the capsid (By similarity).</text>
</comment>
<comment type="subunit">
    <molecule>Protease</molecule>
    <text evidence="5 7">Homodimer, whose active site consists of two apposed aspartic acid residues.</text>
</comment>
<comment type="subunit">
    <molecule>Reverse transcriptase/ribonuclease H</molecule>
    <text evidence="3">Heterodimer of p66 RT and p51 RT (RT p66/p51) (By similarity). Heterodimerization of RT is essential for DNA polymerase activity (By similarity). The overall folding of the subdomains is similar in p66 RT and p51 RT but the spatial arrangements of the subdomains are dramatically different (By similarity).</text>
</comment>
<comment type="subunit">
    <molecule>Integrase</molecule>
    <text evidence="4 5 7">Homotetramer; may further associate as a homohexadecamer (By similarity). Part of the pre-integration complex (PIC) which is composed of viral genome, matrix protein, Vpr and integrase. Interacts with human SMARCB1/INI1 and human PSIP1/LEDGF isoform 1. Interacts with human KPNA3; this interaction might play a role in nuclear import of the pre-integration complex (By similarity). Interacts with human NUP153; this interaction might play a role in nuclear import of the pre-integration complex (By similarity).</text>
</comment>
<comment type="subcellular location">
    <molecule>Gag-Pol polyprotein</molecule>
    <subcellularLocation>
        <location>Host cell membrane</location>
        <topology>Lipid-anchor</topology>
    </subcellularLocation>
    <subcellularLocation>
        <location>Host endosome</location>
        <location>Host multivesicular body</location>
    </subcellularLocation>
    <text evidence="7">These locations are linked to virus assembly sites. The main location is the cell membrane, but under some circumstances, late endosomal compartments can serve as productive sites for virion assembly.</text>
</comment>
<comment type="subcellular location">
    <molecule>Matrix protein p17</molecule>
    <subcellularLocation>
        <location>Virion membrane</location>
        <topology evidence="18">Lipid-anchor</topology>
    </subcellularLocation>
    <subcellularLocation>
        <location evidence="1">Host nucleus</location>
    </subcellularLocation>
    <subcellularLocation>
        <location evidence="1">Host cytoplasm</location>
    </subcellularLocation>
</comment>
<comment type="subcellular location">
    <molecule>Capsid protein p24</molecule>
    <subcellularLocation>
        <location evidence="18">Virion</location>
    </subcellularLocation>
</comment>
<comment type="subcellular location">
    <molecule>Nucleocapsid protein p7</molecule>
    <subcellularLocation>
        <location evidence="18">Virion</location>
    </subcellularLocation>
</comment>
<comment type="subcellular location">
    <molecule>Reverse transcriptase/ribonuclease H</molecule>
    <subcellularLocation>
        <location evidence="18">Virion</location>
    </subcellularLocation>
</comment>
<comment type="subcellular location">
    <molecule>Integrase</molecule>
    <subcellularLocation>
        <location evidence="18">Virion</location>
    </subcellularLocation>
    <subcellularLocation>
        <location evidence="18">Host nucleus</location>
    </subcellularLocation>
    <subcellularLocation>
        <location evidence="18">Host cytoplasm</location>
    </subcellularLocation>
    <text evidence="18">Nuclear at initial phase, cytoplasmic at assembly.</text>
</comment>
<comment type="alternative products">
    <event type="ribosomal frameshifting"/>
    <isoform>
        <id>Q9QBZ5-1</id>
        <name>Gag-Pol polyprotein</name>
        <sequence type="displayed"/>
    </isoform>
    <isoform>
        <id>Q9QBZ6-1</id>
        <name>Gag polyprotein</name>
        <sequence type="external"/>
    </isoform>
    <text>Translation results in the formation of the Gag polyprotein most of the time. Ribosomal frameshifting at the gag-pol genes boundary occurs at low frequency and produces the Gag-Pol polyprotein. This strategy of translation probably allows the virus to modulate the quantity of each viral protein. Maintenance of a correct Gag to Gag-Pol ratio is essential for RNA dimerization and viral infectivity.</text>
</comment>
<comment type="domain">
    <molecule>Reverse transcriptase/ribonuclease H</molecule>
    <text evidence="1">RT is structured in five subdomains: finger, palm, thumb, connection and RNase H. Within the palm subdomain, the 'primer grip' region is thought to be involved in the positioning of the primer terminus for accommodating the incoming nucleotide. The RNase H domain stabilizes the association of RT with primer-template.</text>
</comment>
<comment type="domain">
    <molecule>Reverse transcriptase/ribonuclease H</molecule>
    <text evidence="1">The tryptophan repeat motif is involved in RT p66/p51 dimerization (By similarity).</text>
</comment>
<comment type="domain">
    <molecule>Integrase</molecule>
    <text evidence="1">The core domain contains the D-x(n)-D-x(35)-E motif, named for the phylogenetically conserved glutamic acid and aspartic acid residues and the invariant 35 amino acid spacing between the second and third acidic residues. Each acidic residue of the D,D(35)E motif is independently essential for the 3'-processing and strand transfer activities of purified integrase protein.</text>
</comment>
<comment type="PTM">
    <molecule>Gag-Pol polyprotein</molecule>
    <text evidence="5 11">Specific enzymatic cleavages by the viral protease yield mature proteins. The protease is released by autocatalytic cleavage. The polyprotein is cleaved during and after budding, this process is termed maturation. Proteolytic cleavage of p66 RT removes the RNase H domain to yield the p51 RT subunit. Nucleocapsid protein p7 might be further cleaved after virus entry.</text>
</comment>
<comment type="PTM">
    <molecule>Matrix protein p17</molecule>
    <text evidence="5">Tyrosine phosphorylated presumably in the virion by a host kinase. Phosphorylation is apparently not a major regulator of membrane association.</text>
</comment>
<comment type="PTM">
    <molecule>Capsid protein p24</molecule>
    <text evidence="6">Phosphorylated possibly by host MAPK1; this phosphorylation is necessary for Pin1-mediated virion uncoating.</text>
</comment>
<comment type="PTM">
    <molecule>Nucleocapsid protein p7</molecule>
    <text evidence="2">Methylated by host PRMT6, impairing its function by reducing RNA annealing and the initiation of reverse transcription.</text>
</comment>
<comment type="miscellaneous">
    <molecule>Reverse transcriptase/ribonuclease H</molecule>
    <text evidence="1">Error-prone enzyme that lacks a proof-reading function. High mutations rate is a direct consequence of this characteristic. RT also displays frequent template switching leading to high recombination rate. Recombination mostly occurs between homologous regions of the two copackaged RNA genomes. If these two RNA molecules derive from different viral strains, reverse transcription will give rise to highly recombinated proviral DNAs.</text>
</comment>
<comment type="miscellaneous">
    <text>HIV-1 lineages are divided in three main groups, M (for Major), O (for Outlier), and N (for New, or Non-M, Non-O). The vast majority of strains found worldwide belong to the group M. Group O seems to be endemic to and largely confined to Cameroon and neighboring countries in West Central Africa, where these viruses represent a small minority of HIV-1 strains. The group N is represented by a limited number of isolates from Cameroonian persons. The group M is further subdivided in 9 clades or subtypes (A to D, F to H, J and K).</text>
</comment>
<comment type="miscellaneous">
    <text>Resistance to inhibitors associated with mutations are observed both in viral protease and in reverse transcriptase. Most of the time, single mutations confer only a modest reduction in drug susceptibility. Combination of several mutations is usually required to develop a high-level drug resistance. These mutations are predominantly found in clade B viruses and not in other genotypes. They are listed in the clade B representative isolate HXB2 (AC P04585).</text>
</comment>
<comment type="miscellaneous">
    <molecule>Isoform Gag-Pol polyprotein</molecule>
    <text>Produced by -1 ribosomal frameshifting.</text>
</comment>
<comment type="online information" name="HIV drug resistance mutations">
    <link uri="https://www.iasusa.org/hiv-drug-resistance/hiv-drug-resistance-mutations/"/>
</comment>
<comment type="online information" name="hivdb">
    <link uri="https://hivdb.stanford.edu"/>
    <text>HIV drug resistance database</text>
</comment>
<reference key="1">
    <citation type="journal article" date="2000" name="AIDS Res. Hum. Retroviruses">
        <title>Near-full-length genome sequencing of divergent African HIV type 1 subtype F viruses leads to the identification of a new HIV type 1 subtype designated K.</title>
        <authorList>
            <person name="Triques K."/>
            <person name="Bourgeois A."/>
            <person name="Vidale N."/>
            <person name="Mpoudi-Ngole E."/>
            <person name="Mulanga-Kabeya C."/>
            <person name="Nzilambi N."/>
            <person name="Torimiro N."/>
            <person name="Saman E."/>
            <person name="Delaporte E."/>
            <person name="Peeters M."/>
        </authorList>
    </citation>
    <scope>NUCLEOTIDE SEQUENCE [GENOMIC RNA]</scope>
</reference>
<evidence type="ECO:0000250" key="1"/>
<evidence type="ECO:0000250" key="2">
    <source>
        <dbReference type="UniProtKB" id="P03347"/>
    </source>
</evidence>
<evidence type="ECO:0000250" key="3">
    <source>
        <dbReference type="UniProtKB" id="P03366"/>
    </source>
</evidence>
<evidence type="ECO:0000250" key="4">
    <source>
        <dbReference type="UniProtKB" id="P03367"/>
    </source>
</evidence>
<evidence type="ECO:0000250" key="5">
    <source>
        <dbReference type="UniProtKB" id="P04585"/>
    </source>
</evidence>
<evidence type="ECO:0000250" key="6">
    <source>
        <dbReference type="UniProtKB" id="P12493"/>
    </source>
</evidence>
<evidence type="ECO:0000250" key="7">
    <source>
        <dbReference type="UniProtKB" id="P12497"/>
    </source>
</evidence>
<evidence type="ECO:0000255" key="8"/>
<evidence type="ECO:0000255" key="9">
    <source>
        <dbReference type="PROSITE-ProRule" id="PRU00047"/>
    </source>
</evidence>
<evidence type="ECO:0000255" key="10">
    <source>
        <dbReference type="PROSITE-ProRule" id="PRU00275"/>
    </source>
</evidence>
<evidence type="ECO:0000255" key="11">
    <source>
        <dbReference type="PROSITE-ProRule" id="PRU00405"/>
    </source>
</evidence>
<evidence type="ECO:0000255" key="12">
    <source>
        <dbReference type="PROSITE-ProRule" id="PRU00408"/>
    </source>
</evidence>
<evidence type="ECO:0000255" key="13">
    <source>
        <dbReference type="PROSITE-ProRule" id="PRU00450"/>
    </source>
</evidence>
<evidence type="ECO:0000255" key="14">
    <source>
        <dbReference type="PROSITE-ProRule" id="PRU00457"/>
    </source>
</evidence>
<evidence type="ECO:0000255" key="15">
    <source>
        <dbReference type="PROSITE-ProRule" id="PRU00506"/>
    </source>
</evidence>
<evidence type="ECO:0000255" key="16">
    <source>
        <dbReference type="PROSITE-ProRule" id="PRU10094"/>
    </source>
</evidence>
<evidence type="ECO:0000256" key="17">
    <source>
        <dbReference type="SAM" id="MobiDB-lite"/>
    </source>
</evidence>
<evidence type="ECO:0000305" key="18"/>
<organism>
    <name type="scientific">Human immunodeficiency virus type 1 group M subtype F2 (isolate MP255)</name>
    <name type="common">HIV-1</name>
    <dbReference type="NCBI Taxonomy" id="388815"/>
    <lineage>
        <taxon>Viruses</taxon>
        <taxon>Riboviria</taxon>
        <taxon>Pararnavirae</taxon>
        <taxon>Artverviricota</taxon>
        <taxon>Revtraviricetes</taxon>
        <taxon>Ortervirales</taxon>
        <taxon>Retroviridae</taxon>
        <taxon>Orthoretrovirinae</taxon>
        <taxon>Lentivirus</taxon>
        <taxon>Human immunodeficiency virus type 1</taxon>
    </lineage>
</organism>
<organismHost>
    <name type="scientific">Homo sapiens</name>
    <name type="common">Human</name>
    <dbReference type="NCBI Taxonomy" id="9606"/>
</organismHost>
<proteinExistence type="inferred from homology"/>
<feature type="initiator methionine" description="Removed; by host" evidence="1">
    <location>
        <position position="1"/>
    </location>
</feature>
<feature type="chain" id="PRO_0000261272" description="Gag-Pol polyprotein">
    <location>
        <begin position="2"/>
        <end position="1430"/>
    </location>
</feature>
<feature type="chain" id="PRO_0000246506" description="Matrix protein p17" evidence="1">
    <location>
        <begin position="2"/>
        <end position="128"/>
    </location>
</feature>
<feature type="chain" id="PRO_0000246507" description="Capsid protein p24" evidence="1">
    <location>
        <begin position="129"/>
        <end position="359"/>
    </location>
</feature>
<feature type="peptide" id="PRO_0000246508" description="Spacer peptide 1" evidence="1">
    <location>
        <begin position="360"/>
        <end position="372"/>
    </location>
</feature>
<feature type="chain" id="PRO_0000246509" description="Nucleocapsid protein p7" evidence="1">
    <location>
        <begin position="373"/>
        <end position="427"/>
    </location>
</feature>
<feature type="peptide" id="PRO_0000246721" description="Transframe peptide" evidence="8">
    <location>
        <begin position="428"/>
        <end position="435"/>
    </location>
</feature>
<feature type="chain" id="PRO_0000246510" description="p6-pol" evidence="8">
    <location>
        <begin position="436"/>
        <end position="483"/>
    </location>
</feature>
<feature type="chain" id="PRO_0000246511" description="Protease" evidence="1">
    <location>
        <begin position="484"/>
        <end position="582"/>
    </location>
</feature>
<feature type="chain" id="PRO_0000246512" description="Reverse transcriptase/ribonuclease H" evidence="1">
    <location>
        <begin position="583"/>
        <end position="1142"/>
    </location>
</feature>
<feature type="chain" id="PRO_0000246513" description="p51 RT" evidence="1">
    <location>
        <begin position="583"/>
        <end position="1022"/>
    </location>
</feature>
<feature type="chain" id="PRO_0000246514" description="p15" evidence="1">
    <location>
        <begin position="1023"/>
        <end position="1142"/>
    </location>
</feature>
<feature type="chain" id="PRO_0000246515" description="Integrase" evidence="1">
    <location>
        <begin position="1143"/>
        <end position="1430"/>
    </location>
</feature>
<feature type="domain" description="Peptidase A2" evidence="10">
    <location>
        <begin position="503"/>
        <end position="572"/>
    </location>
</feature>
<feature type="domain" description="Reverse transcriptase" evidence="11">
    <location>
        <begin position="626"/>
        <end position="816"/>
    </location>
</feature>
<feature type="domain" description="RNase H type-1" evidence="12">
    <location>
        <begin position="1016"/>
        <end position="1139"/>
    </location>
</feature>
<feature type="domain" description="Integrase catalytic" evidence="14">
    <location>
        <begin position="1196"/>
        <end position="1346"/>
    </location>
</feature>
<feature type="zinc finger region" description="CCHC-type 1" evidence="9">
    <location>
        <begin position="385"/>
        <end position="402"/>
    </location>
</feature>
<feature type="zinc finger region" description="CCHC-type 2" evidence="9">
    <location>
        <begin position="406"/>
        <end position="423"/>
    </location>
</feature>
<feature type="zinc finger region" description="Integrase-type" evidence="13">
    <location>
        <begin position="1145"/>
        <end position="1186"/>
    </location>
</feature>
<feature type="DNA-binding region" description="Integrase-type" evidence="15">
    <location>
        <begin position="1365"/>
        <end position="1412"/>
    </location>
</feature>
<feature type="region of interest" description="Interaction with Gp41" evidence="7">
    <location>
        <begin position="7"/>
        <end position="31"/>
    </location>
</feature>
<feature type="region of interest" description="Interaction with host CALM1" evidence="5">
    <location>
        <begin position="8"/>
        <end position="43"/>
    </location>
</feature>
<feature type="region of interest" description="Interaction with host AP3D1" evidence="7">
    <location>
        <begin position="12"/>
        <end position="19"/>
    </location>
</feature>
<feature type="region of interest" description="Interaction with membrane phosphatidylinositol 4,5-bisphosphate and RNA" evidence="7">
    <location>
        <begin position="14"/>
        <end position="33"/>
    </location>
</feature>
<feature type="region of interest" description="Interaction with membrane phosphatidylinositol 4,5-bisphosphate" evidence="7">
    <location>
        <begin position="73"/>
        <end position="77"/>
    </location>
</feature>
<feature type="region of interest" description="Disordered" evidence="17">
    <location>
        <begin position="105"/>
        <end position="124"/>
    </location>
</feature>
<feature type="region of interest" description="Interaction with human PPIA/CYPA and NUP153" evidence="7">
    <location>
        <begin position="185"/>
        <end position="223"/>
    </location>
</feature>
<feature type="region of interest" description="Dimerization/Multimerization of capsid protein p24" evidence="5">
    <location>
        <begin position="273"/>
        <end position="359"/>
    </location>
</feature>
<feature type="region of interest" description="Disordered" evidence="17">
    <location>
        <begin position="440"/>
        <end position="479"/>
    </location>
</feature>
<feature type="region of interest" description="Dimerization of protease" evidence="5">
    <location>
        <begin position="484"/>
        <end position="488"/>
    </location>
</feature>
<feature type="region of interest" description="Dimerization of protease" evidence="5">
    <location>
        <begin position="532"/>
        <end position="538"/>
    </location>
</feature>
<feature type="region of interest" description="Dimerization of protease" evidence="5">
    <location>
        <begin position="571"/>
        <end position="583"/>
    </location>
</feature>
<feature type="region of interest" description="RT 'primer grip'" evidence="1">
    <location>
        <begin position="809"/>
        <end position="817"/>
    </location>
</feature>
<feature type="short sequence motif" description="Nuclear export signal" evidence="1">
    <location>
        <begin position="16"/>
        <end position="22"/>
    </location>
</feature>
<feature type="short sequence motif" description="Nuclear localization signal" evidence="1">
    <location>
        <begin position="26"/>
        <end position="32"/>
    </location>
</feature>
<feature type="short sequence motif" description="Tryptophan repeat motif" evidence="1">
    <location>
        <begin position="980"/>
        <end position="996"/>
    </location>
</feature>
<feature type="compositionally biased region" description="Polar residues" evidence="17">
    <location>
        <begin position="445"/>
        <end position="454"/>
    </location>
</feature>
<feature type="active site" description="For protease activity; shared with dimeric partner" evidence="16">
    <location>
        <position position="508"/>
    </location>
</feature>
<feature type="binding site" evidence="1">
    <location>
        <position position="692"/>
    </location>
    <ligand>
        <name>Mg(2+)</name>
        <dbReference type="ChEBI" id="CHEBI:18420"/>
        <label>1</label>
        <note>catalytic; for reverse transcriptase activity</note>
    </ligand>
</feature>
<feature type="binding site" evidence="1">
    <location>
        <position position="767"/>
    </location>
    <ligand>
        <name>Mg(2+)</name>
        <dbReference type="ChEBI" id="CHEBI:18420"/>
        <label>1</label>
        <note>catalytic; for reverse transcriptase activity</note>
    </ligand>
</feature>
<feature type="binding site" evidence="1">
    <location>
        <position position="768"/>
    </location>
    <ligand>
        <name>Mg(2+)</name>
        <dbReference type="ChEBI" id="CHEBI:18420"/>
        <label>1</label>
        <note>catalytic; for reverse transcriptase activity</note>
    </ligand>
</feature>
<feature type="binding site" evidence="1">
    <location>
        <position position="1025"/>
    </location>
    <ligand>
        <name>Mg(2+)</name>
        <dbReference type="ChEBI" id="CHEBI:18420"/>
        <label>2</label>
        <note>catalytic; for RNase H activity</note>
    </ligand>
</feature>
<feature type="binding site" evidence="1">
    <location>
        <position position="1060"/>
    </location>
    <ligand>
        <name>Mg(2+)</name>
        <dbReference type="ChEBI" id="CHEBI:18420"/>
        <label>2</label>
        <note>catalytic; for RNase H activity</note>
    </ligand>
</feature>
<feature type="binding site" evidence="1">
    <location>
        <position position="1080"/>
    </location>
    <ligand>
        <name>Mg(2+)</name>
        <dbReference type="ChEBI" id="CHEBI:18420"/>
        <label>2</label>
        <note>catalytic; for RNase H activity</note>
    </ligand>
</feature>
<feature type="binding site" evidence="1">
    <location>
        <position position="1131"/>
    </location>
    <ligand>
        <name>Mg(2+)</name>
        <dbReference type="ChEBI" id="CHEBI:18420"/>
        <label>2</label>
        <note>catalytic; for RNase H activity</note>
    </ligand>
</feature>
<feature type="binding site" evidence="13">
    <location>
        <position position="1154"/>
    </location>
    <ligand>
        <name>Zn(2+)</name>
        <dbReference type="ChEBI" id="CHEBI:29105"/>
    </ligand>
</feature>
<feature type="binding site" evidence="13">
    <location>
        <position position="1158"/>
    </location>
    <ligand>
        <name>Zn(2+)</name>
        <dbReference type="ChEBI" id="CHEBI:29105"/>
    </ligand>
</feature>
<feature type="binding site" evidence="13">
    <location>
        <position position="1182"/>
    </location>
    <ligand>
        <name>Zn(2+)</name>
        <dbReference type="ChEBI" id="CHEBI:29105"/>
    </ligand>
</feature>
<feature type="binding site" evidence="13">
    <location>
        <position position="1185"/>
    </location>
    <ligand>
        <name>Zn(2+)</name>
        <dbReference type="ChEBI" id="CHEBI:29105"/>
    </ligand>
</feature>
<feature type="binding site" evidence="1">
    <location>
        <position position="1206"/>
    </location>
    <ligand>
        <name>Mg(2+)</name>
        <dbReference type="ChEBI" id="CHEBI:18420"/>
        <label>3</label>
        <note>catalytic; for integrase activity</note>
    </ligand>
</feature>
<feature type="binding site" evidence="1">
    <location>
        <position position="1258"/>
    </location>
    <ligand>
        <name>Mg(2+)</name>
        <dbReference type="ChEBI" id="CHEBI:18420"/>
        <label>3</label>
        <note>catalytic; for integrase activity</note>
    </ligand>
</feature>
<feature type="binding site" evidence="5">
    <location>
        <position position="1294"/>
    </location>
    <ligand>
        <name>Mg(2+)</name>
        <dbReference type="ChEBI" id="CHEBI:18420"/>
        <label>3</label>
        <note>catalytic; for integrase activity</note>
    </ligand>
</feature>
<feature type="site" description="Cleavage; by viral protease" evidence="1">
    <location>
        <begin position="128"/>
        <end position="129"/>
    </location>
</feature>
<feature type="site" description="Cis/trans isomerization of proline peptide bond; by human PPIA/CYPA" evidence="1">
    <location>
        <begin position="217"/>
        <end position="218"/>
    </location>
</feature>
<feature type="site" description="Cleavage; by viral protease" evidence="1">
    <location>
        <begin position="359"/>
        <end position="360"/>
    </location>
</feature>
<feature type="site" description="Cleavage; by viral protease" evidence="1">
    <location>
        <begin position="372"/>
        <end position="373"/>
    </location>
</feature>
<feature type="site" description="Cleavage; by viral protease" evidence="8">
    <location>
        <begin position="427"/>
        <end position="428"/>
    </location>
</feature>
<feature type="site" description="Cleavage; by viral protease" evidence="1">
    <location>
        <begin position="435"/>
        <end position="436"/>
    </location>
</feature>
<feature type="site" description="Cleavage; by viral protease" evidence="1">
    <location>
        <begin position="483"/>
        <end position="484"/>
    </location>
</feature>
<feature type="site" description="Cleavage; by viral protease" evidence="1">
    <location>
        <begin position="582"/>
        <end position="583"/>
    </location>
</feature>
<feature type="site" description="Essential for RT p66/p51 heterodimerization" evidence="1">
    <location>
        <position position="983"/>
    </location>
</feature>
<feature type="site" description="Essential for RT p66/p51 heterodimerization" evidence="1">
    <location>
        <position position="996"/>
    </location>
</feature>
<feature type="site" description="Cleavage; by viral protease; partial" evidence="1">
    <location>
        <begin position="1022"/>
        <end position="1023"/>
    </location>
</feature>
<feature type="site" description="Cleavage; by viral protease" evidence="1">
    <location>
        <begin position="1142"/>
        <end position="1143"/>
    </location>
</feature>
<feature type="modified residue" description="Phosphotyrosine; by host" evidence="1">
    <location>
        <position position="128"/>
    </location>
</feature>
<feature type="lipid moiety-binding region" description="N-myristoyl glycine; by host" evidence="1">
    <location>
        <position position="2"/>
    </location>
</feature>
<gene>
    <name type="primary">gag-pol</name>
</gene>
<accession>Q9QBZ5</accession>